<organism>
    <name type="scientific">Bacillus licheniformis (strain ATCC 14580 / DSM 13 / JCM 2505 / CCUG 7422 / NBRC 12200 / NCIMB 9375 / NCTC 10341 / NRRL NRS-1264 / Gibson 46)</name>
    <dbReference type="NCBI Taxonomy" id="279010"/>
    <lineage>
        <taxon>Bacteria</taxon>
        <taxon>Bacillati</taxon>
        <taxon>Bacillota</taxon>
        <taxon>Bacilli</taxon>
        <taxon>Bacillales</taxon>
        <taxon>Bacillaceae</taxon>
        <taxon>Bacillus</taxon>
    </lineage>
</organism>
<reference key="1">
    <citation type="journal article" date="2004" name="J. Mol. Microbiol. Biotechnol.">
        <title>The complete genome sequence of Bacillus licheniformis DSM13, an organism with great industrial potential.</title>
        <authorList>
            <person name="Veith B."/>
            <person name="Herzberg C."/>
            <person name="Steckel S."/>
            <person name="Feesche J."/>
            <person name="Maurer K.H."/>
            <person name="Ehrenreich P."/>
            <person name="Baeumer S."/>
            <person name="Henne A."/>
            <person name="Liesegang H."/>
            <person name="Merkl R."/>
            <person name="Ehrenreich A."/>
            <person name="Gottschalk G."/>
        </authorList>
    </citation>
    <scope>NUCLEOTIDE SEQUENCE [LARGE SCALE GENOMIC DNA]</scope>
    <source>
        <strain>ATCC 14580 / DSM 13 / JCM 2505 / CCUG 7422 / NBRC 12200 / NCIMB 9375 / NCTC 10341 / NRRL NRS-1264 / Gibson 46</strain>
    </source>
</reference>
<reference key="2">
    <citation type="journal article" date="2004" name="Genome Biol.">
        <title>Complete genome sequence of the industrial bacterium Bacillus licheniformis and comparisons with closely related Bacillus species.</title>
        <authorList>
            <person name="Rey M.W."/>
            <person name="Ramaiya P."/>
            <person name="Nelson B.A."/>
            <person name="Brody-Karpin S.D."/>
            <person name="Zaretsky E.J."/>
            <person name="Tang M."/>
            <person name="Lopez de Leon A."/>
            <person name="Xiang H."/>
            <person name="Gusti V."/>
            <person name="Clausen I.G."/>
            <person name="Olsen P.B."/>
            <person name="Rasmussen M.D."/>
            <person name="Andersen J.T."/>
            <person name="Joergensen P.L."/>
            <person name="Larsen T.S."/>
            <person name="Sorokin A."/>
            <person name="Bolotin A."/>
            <person name="Lapidus A."/>
            <person name="Galleron N."/>
            <person name="Ehrlich S.D."/>
            <person name="Berka R.M."/>
        </authorList>
    </citation>
    <scope>NUCLEOTIDE SEQUENCE [LARGE SCALE GENOMIC DNA]</scope>
    <source>
        <strain>ATCC 14580 / DSM 13 / JCM 2505 / CCUG 7422 / NBRC 12200 / NCIMB 9375 / NCTC 10341 / NRRL NRS-1264 / Gibson 46</strain>
    </source>
</reference>
<name>HIS4_BACLD</name>
<proteinExistence type="inferred from homology"/>
<keyword id="KW-0028">Amino-acid biosynthesis</keyword>
<keyword id="KW-0963">Cytoplasm</keyword>
<keyword id="KW-0368">Histidine biosynthesis</keyword>
<keyword id="KW-0413">Isomerase</keyword>
<keyword id="KW-1185">Reference proteome</keyword>
<sequence>MSEFTVYPAIDIRNGKCVRLIQGDYEKETIYGHSPLEMASRFAEEGASWIHLVDLDGAREGKKVNGGHVISIADKLDVKVQVGGGIRTEKDVYDYLSQGVERVILGSSAVSNTEFVKKMLKAYGGHIAIGLDARDGFVSTEGWLETSSVRAEELGRELANEGAEVFIFTDIATDGMLSGPNINSTVELARATGKQVIASGGVSSLADLEALASRASEGVSGAIVGKALYTNQFTVAEALERVAAK</sequence>
<accession>Q65EG2</accession>
<accession>Q62PY0</accession>
<protein>
    <recommendedName>
        <fullName evidence="1">1-(5-phosphoribosyl)-5-[(5-phosphoribosylamino)methylideneamino] imidazole-4-carboxamide isomerase</fullName>
        <ecNumber evidence="1">5.3.1.16</ecNumber>
    </recommendedName>
    <alternativeName>
        <fullName evidence="1">Phosphoribosylformimino-5-aminoimidazole carboxamide ribotide isomerase</fullName>
    </alternativeName>
</protein>
<dbReference type="EC" id="5.3.1.16" evidence="1"/>
<dbReference type="EMBL" id="AE017333">
    <property type="protein sequence ID" value="AAU42552.1"/>
    <property type="molecule type" value="Genomic_DNA"/>
</dbReference>
<dbReference type="EMBL" id="CP000002">
    <property type="protein sequence ID" value="AAU25181.1"/>
    <property type="molecule type" value="Genomic_DNA"/>
</dbReference>
<dbReference type="RefSeq" id="WP_011198343.1">
    <property type="nucleotide sequence ID" value="NC_006322.1"/>
</dbReference>
<dbReference type="SMR" id="Q65EG2"/>
<dbReference type="STRING" id="279010.BL03411"/>
<dbReference type="GeneID" id="92859689"/>
<dbReference type="KEGG" id="bld:BLi03733"/>
<dbReference type="KEGG" id="bli:BL03411"/>
<dbReference type="PATRIC" id="fig|279010.13.peg.3799"/>
<dbReference type="eggNOG" id="COG0106">
    <property type="taxonomic scope" value="Bacteria"/>
</dbReference>
<dbReference type="HOGENOM" id="CLU_048577_1_1_9"/>
<dbReference type="UniPathway" id="UPA00031">
    <property type="reaction ID" value="UER00009"/>
</dbReference>
<dbReference type="Proteomes" id="UP000000606">
    <property type="component" value="Chromosome"/>
</dbReference>
<dbReference type="GO" id="GO:0005737">
    <property type="term" value="C:cytoplasm"/>
    <property type="evidence" value="ECO:0007669"/>
    <property type="project" value="UniProtKB-SubCell"/>
</dbReference>
<dbReference type="GO" id="GO:0003949">
    <property type="term" value="F:1-(5-phosphoribosyl)-5-[(5-phosphoribosylamino)methylideneamino]imidazole-4-carboxamide isomerase activity"/>
    <property type="evidence" value="ECO:0007669"/>
    <property type="project" value="UniProtKB-UniRule"/>
</dbReference>
<dbReference type="GO" id="GO:0000105">
    <property type="term" value="P:L-histidine biosynthetic process"/>
    <property type="evidence" value="ECO:0007669"/>
    <property type="project" value="UniProtKB-UniRule"/>
</dbReference>
<dbReference type="GO" id="GO:0000162">
    <property type="term" value="P:L-tryptophan biosynthetic process"/>
    <property type="evidence" value="ECO:0007669"/>
    <property type="project" value="TreeGrafter"/>
</dbReference>
<dbReference type="CDD" id="cd04732">
    <property type="entry name" value="HisA"/>
    <property type="match status" value="1"/>
</dbReference>
<dbReference type="FunFam" id="3.20.20.70:FF:000009">
    <property type="entry name" value="1-(5-phosphoribosyl)-5-[(5-phosphoribosylamino)methylideneamino] imidazole-4-carboxamide isomerase"/>
    <property type="match status" value="1"/>
</dbReference>
<dbReference type="Gene3D" id="3.20.20.70">
    <property type="entry name" value="Aldolase class I"/>
    <property type="match status" value="1"/>
</dbReference>
<dbReference type="HAMAP" id="MF_01014">
    <property type="entry name" value="HisA"/>
    <property type="match status" value="1"/>
</dbReference>
<dbReference type="InterPro" id="IPR013785">
    <property type="entry name" value="Aldolase_TIM"/>
</dbReference>
<dbReference type="InterPro" id="IPR006062">
    <property type="entry name" value="His_biosynth"/>
</dbReference>
<dbReference type="InterPro" id="IPR006063">
    <property type="entry name" value="HisA_bact_arch"/>
</dbReference>
<dbReference type="InterPro" id="IPR044524">
    <property type="entry name" value="Isoase_HisA-like"/>
</dbReference>
<dbReference type="InterPro" id="IPR023016">
    <property type="entry name" value="Isoase_HisA-like_bact"/>
</dbReference>
<dbReference type="InterPro" id="IPR011060">
    <property type="entry name" value="RibuloseP-bd_barrel"/>
</dbReference>
<dbReference type="NCBIfam" id="TIGR00007">
    <property type="entry name" value="1-(5-phosphoribosyl)-5-[(5-phosphoribosylamino)methylideneamino]imidazole-4-carboxamide isomerase"/>
    <property type="match status" value="1"/>
</dbReference>
<dbReference type="PANTHER" id="PTHR43090">
    <property type="entry name" value="1-(5-PHOSPHORIBOSYL)-5-[(5-PHOSPHORIBOSYLAMINO)METHYLIDENEAMINO] IMIDAZOLE-4-CARBOXAMIDE ISOMERASE"/>
    <property type="match status" value="1"/>
</dbReference>
<dbReference type="PANTHER" id="PTHR43090:SF2">
    <property type="entry name" value="1-(5-PHOSPHORIBOSYL)-5-[(5-PHOSPHORIBOSYLAMINO)METHYLIDENEAMINO] IMIDAZOLE-4-CARBOXAMIDE ISOMERASE"/>
    <property type="match status" value="1"/>
</dbReference>
<dbReference type="Pfam" id="PF00977">
    <property type="entry name" value="His_biosynth"/>
    <property type="match status" value="1"/>
</dbReference>
<dbReference type="SUPFAM" id="SSF51366">
    <property type="entry name" value="Ribulose-phoshate binding barrel"/>
    <property type="match status" value="1"/>
</dbReference>
<comment type="catalytic activity">
    <reaction evidence="1">
        <text>1-(5-phospho-beta-D-ribosyl)-5-[(5-phospho-beta-D-ribosylamino)methylideneamino]imidazole-4-carboxamide = 5-[(5-phospho-1-deoxy-D-ribulos-1-ylimino)methylamino]-1-(5-phospho-beta-D-ribosyl)imidazole-4-carboxamide</text>
        <dbReference type="Rhea" id="RHEA:15469"/>
        <dbReference type="ChEBI" id="CHEBI:58435"/>
        <dbReference type="ChEBI" id="CHEBI:58525"/>
        <dbReference type="EC" id="5.3.1.16"/>
    </reaction>
</comment>
<comment type="pathway">
    <text evidence="1">Amino-acid biosynthesis; L-histidine biosynthesis; L-histidine from 5-phospho-alpha-D-ribose 1-diphosphate: step 4/9.</text>
</comment>
<comment type="subcellular location">
    <subcellularLocation>
        <location evidence="1">Cytoplasm</location>
    </subcellularLocation>
</comment>
<comment type="similarity">
    <text evidence="1">Belongs to the HisA/HisF family.</text>
</comment>
<feature type="chain" id="PRO_0000141976" description="1-(5-phosphoribosyl)-5-[(5-phosphoribosylamino)methylideneamino] imidazole-4-carboxamide isomerase">
    <location>
        <begin position="1"/>
        <end position="245"/>
    </location>
</feature>
<feature type="active site" description="Proton acceptor" evidence="1">
    <location>
        <position position="11"/>
    </location>
</feature>
<feature type="active site" description="Proton donor" evidence="1">
    <location>
        <position position="132"/>
    </location>
</feature>
<evidence type="ECO:0000255" key="1">
    <source>
        <dbReference type="HAMAP-Rule" id="MF_01014"/>
    </source>
</evidence>
<gene>
    <name evidence="1" type="primary">hisA</name>
    <name type="ordered locus">BLi03733</name>
    <name type="ordered locus">BL03411</name>
</gene>